<accession>Q6CAR6</accession>
<evidence type="ECO:0000250" key="1"/>
<evidence type="ECO:0000305" key="2"/>
<proteinExistence type="inferred from homology"/>
<dbReference type="EMBL" id="CR382130">
    <property type="protein sequence ID" value="CAG80432.1"/>
    <property type="molecule type" value="Genomic_DNA"/>
</dbReference>
<dbReference type="RefSeq" id="XP_502246.1">
    <property type="nucleotide sequence ID" value="XM_502246.1"/>
</dbReference>
<dbReference type="SMR" id="Q6CAR6"/>
<dbReference type="FunCoup" id="Q6CAR6">
    <property type="interactions" value="1090"/>
</dbReference>
<dbReference type="STRING" id="284591.Q6CAR6"/>
<dbReference type="EnsemblFungi" id="CAG80432">
    <property type="protein sequence ID" value="CAG80432"/>
    <property type="gene ID" value="YALI0_D00561g"/>
</dbReference>
<dbReference type="KEGG" id="yli:2910395"/>
<dbReference type="VEuPathDB" id="FungiDB:YALI0_D00561g"/>
<dbReference type="HOGENOM" id="CLU_007736_0_0_1"/>
<dbReference type="InParanoid" id="Q6CAR6"/>
<dbReference type="OMA" id="IWYNYLR"/>
<dbReference type="OrthoDB" id="107265at4891"/>
<dbReference type="Proteomes" id="UP000001300">
    <property type="component" value="Chromosome D"/>
</dbReference>
<dbReference type="GO" id="GO:0071014">
    <property type="term" value="C:post-mRNA release spliceosomal complex"/>
    <property type="evidence" value="ECO:0000318"/>
    <property type="project" value="GO_Central"/>
</dbReference>
<dbReference type="GO" id="GO:0000974">
    <property type="term" value="C:Prp19 complex"/>
    <property type="evidence" value="ECO:0000318"/>
    <property type="project" value="GO_Central"/>
</dbReference>
<dbReference type="GO" id="GO:0071007">
    <property type="term" value="C:U2-type catalytic step 2 spliceosome"/>
    <property type="evidence" value="ECO:0000318"/>
    <property type="project" value="GO_Central"/>
</dbReference>
<dbReference type="GO" id="GO:0000349">
    <property type="term" value="P:generation of catalytic spliceosome for first transesterification step"/>
    <property type="evidence" value="ECO:0000318"/>
    <property type="project" value="GO_Central"/>
</dbReference>
<dbReference type="GO" id="GO:0000398">
    <property type="term" value="P:mRNA splicing, via spliceosome"/>
    <property type="evidence" value="ECO:0000318"/>
    <property type="project" value="GO_Central"/>
</dbReference>
<dbReference type="FunFam" id="1.25.40.10:FF:000137">
    <property type="entry name" value="Pre-mRNA-splicing factor syf1"/>
    <property type="match status" value="1"/>
</dbReference>
<dbReference type="Gene3D" id="1.25.40.10">
    <property type="entry name" value="Tetratricopeptide repeat domain"/>
    <property type="match status" value="2"/>
</dbReference>
<dbReference type="InterPro" id="IPR003107">
    <property type="entry name" value="HAT"/>
</dbReference>
<dbReference type="InterPro" id="IPR055433">
    <property type="entry name" value="HAT_Syf1-like_N"/>
</dbReference>
<dbReference type="InterPro" id="IPR056350">
    <property type="entry name" value="HAT_Syf1_central"/>
</dbReference>
<dbReference type="InterPro" id="IPR055430">
    <property type="entry name" value="HAT_Syf1_CNRKL1_C"/>
</dbReference>
<dbReference type="InterPro" id="IPR045075">
    <property type="entry name" value="Syf1-like"/>
</dbReference>
<dbReference type="InterPro" id="IPR011990">
    <property type="entry name" value="TPR-like_helical_dom_sf"/>
</dbReference>
<dbReference type="PANTHER" id="PTHR11246">
    <property type="entry name" value="PRE-MRNA SPLICING FACTOR"/>
    <property type="match status" value="1"/>
</dbReference>
<dbReference type="PANTHER" id="PTHR11246:SF5">
    <property type="entry name" value="PRE-MRNA-SPLICING FACTOR SYF1"/>
    <property type="match status" value="1"/>
</dbReference>
<dbReference type="Pfam" id="PF23231">
    <property type="entry name" value="HAT_Syf1_CNRKL1_C"/>
    <property type="match status" value="1"/>
</dbReference>
<dbReference type="Pfam" id="PF23233">
    <property type="entry name" value="HAT_Syf1_CNRKL1_N"/>
    <property type="match status" value="1"/>
</dbReference>
<dbReference type="Pfam" id="PF23220">
    <property type="entry name" value="HAT_Syf1_M"/>
    <property type="match status" value="1"/>
</dbReference>
<dbReference type="SMART" id="SM00386">
    <property type="entry name" value="HAT"/>
    <property type="match status" value="10"/>
</dbReference>
<dbReference type="SUPFAM" id="SSF48452">
    <property type="entry name" value="TPR-like"/>
    <property type="match status" value="5"/>
</dbReference>
<name>SYF1_YARLI</name>
<sequence length="736" mass="84663">MSQHELDIASSPGDVRPWIRYISSVKNDKTTARQKCILFERAVTALPRSYKLWKEYLDFRSGLCTGLNPIKHADEYDRVNALYEKSLVLLHKMPVIWLQYLQFLMLQPKVTKTRSVINEALRSLPVQQHPRVLKLALQFGTKVGGPTSVQIWKRYVLAYPDQKETMAQSLIKMGYHGEAAVVLIELLNASGDNYALWTELVDLIGESDKLTLEPPVEQIISSGIKRFPDQRGPLTVQLANFLVRNGDLESARDVFEDGITTANTVRDFTVVFDAYAEFEERIVTHLIENESPMADLRIAKLDHLLERRPFLISDVRLRREPYSVLEWQKRIALYEDPAETVAAYTEAVQSIPPAKADGKLSQLWISWAKFYAEDRETACEIYHKATLVPYKSVSELADVYLAWSQYESENDHWENAVKIIKQALESPNTHVSYHNSDLTAQDRIHKSVRLWSYYADLVESYGTFEETKQVYEKIMALDLLTPLFVVNYATLLEENDHFEEMFKVYEKGISLFEESAFEIWNLYLVKASPRLGLERLRDLFEDAISKFPTQKALYILYGKLEEDRGLVRNAMRVYSAMCDHVKTSETFKYYIGRTVENFGLAATRPVYDKALESLPNKDASELALDYAQMEEKLGEIDRARAIYGYGSQFSDPQIIKYYDAWHKFEVAHGTEDTFKDMLRIKRSIQAQFNTDIHYATTAAEVKKGTVQEFVKGETVQKGNIEPPVAQANEDEIELDI</sequence>
<reference key="1">
    <citation type="journal article" date="2004" name="Nature">
        <title>Genome evolution in yeasts.</title>
        <authorList>
            <person name="Dujon B."/>
            <person name="Sherman D."/>
            <person name="Fischer G."/>
            <person name="Durrens P."/>
            <person name="Casaregola S."/>
            <person name="Lafontaine I."/>
            <person name="de Montigny J."/>
            <person name="Marck C."/>
            <person name="Neuveglise C."/>
            <person name="Talla E."/>
            <person name="Goffard N."/>
            <person name="Frangeul L."/>
            <person name="Aigle M."/>
            <person name="Anthouard V."/>
            <person name="Babour A."/>
            <person name="Barbe V."/>
            <person name="Barnay S."/>
            <person name="Blanchin S."/>
            <person name="Beckerich J.-M."/>
            <person name="Beyne E."/>
            <person name="Bleykasten C."/>
            <person name="Boisrame A."/>
            <person name="Boyer J."/>
            <person name="Cattolico L."/>
            <person name="Confanioleri F."/>
            <person name="de Daruvar A."/>
            <person name="Despons L."/>
            <person name="Fabre E."/>
            <person name="Fairhead C."/>
            <person name="Ferry-Dumazet H."/>
            <person name="Groppi A."/>
            <person name="Hantraye F."/>
            <person name="Hennequin C."/>
            <person name="Jauniaux N."/>
            <person name="Joyet P."/>
            <person name="Kachouri R."/>
            <person name="Kerrest A."/>
            <person name="Koszul R."/>
            <person name="Lemaire M."/>
            <person name="Lesur I."/>
            <person name="Ma L."/>
            <person name="Muller H."/>
            <person name="Nicaud J.-M."/>
            <person name="Nikolski M."/>
            <person name="Oztas S."/>
            <person name="Ozier-Kalogeropoulos O."/>
            <person name="Pellenz S."/>
            <person name="Potier S."/>
            <person name="Richard G.-F."/>
            <person name="Straub M.-L."/>
            <person name="Suleau A."/>
            <person name="Swennen D."/>
            <person name="Tekaia F."/>
            <person name="Wesolowski-Louvel M."/>
            <person name="Westhof E."/>
            <person name="Wirth B."/>
            <person name="Zeniou-Meyer M."/>
            <person name="Zivanovic Y."/>
            <person name="Bolotin-Fukuhara M."/>
            <person name="Thierry A."/>
            <person name="Bouchier C."/>
            <person name="Caudron B."/>
            <person name="Scarpelli C."/>
            <person name="Gaillardin C."/>
            <person name="Weissenbach J."/>
            <person name="Wincker P."/>
            <person name="Souciet J.-L."/>
        </authorList>
    </citation>
    <scope>NUCLEOTIDE SEQUENCE [LARGE SCALE GENOMIC DNA]</scope>
    <source>
        <strain>CLIB 122 / E 150</strain>
    </source>
</reference>
<protein>
    <recommendedName>
        <fullName>Pre-mRNA-splicing factor SYF1</fullName>
    </recommendedName>
</protein>
<keyword id="KW-0507">mRNA processing</keyword>
<keyword id="KW-0508">mRNA splicing</keyword>
<keyword id="KW-0539">Nucleus</keyword>
<keyword id="KW-1185">Reference proteome</keyword>
<keyword id="KW-0677">Repeat</keyword>
<keyword id="KW-0747">Spliceosome</keyword>
<comment type="function">
    <text evidence="1">Involved in pre-mRNA splicing and cell cycle progression.</text>
</comment>
<comment type="subunit">
    <text evidence="1">Associated with the spliceosome.</text>
</comment>
<comment type="subcellular location">
    <subcellularLocation>
        <location evidence="1">Nucleus</location>
    </subcellularLocation>
</comment>
<comment type="similarity">
    <text evidence="2">Belongs to the crooked-neck family.</text>
</comment>
<organism>
    <name type="scientific">Yarrowia lipolytica (strain CLIB 122 / E 150)</name>
    <name type="common">Yeast</name>
    <name type="synonym">Candida lipolytica</name>
    <dbReference type="NCBI Taxonomy" id="284591"/>
    <lineage>
        <taxon>Eukaryota</taxon>
        <taxon>Fungi</taxon>
        <taxon>Dikarya</taxon>
        <taxon>Ascomycota</taxon>
        <taxon>Saccharomycotina</taxon>
        <taxon>Dipodascomycetes</taxon>
        <taxon>Dipodascales</taxon>
        <taxon>Dipodascales incertae sedis</taxon>
        <taxon>Yarrowia</taxon>
    </lineage>
</organism>
<gene>
    <name type="primary">SYF1</name>
    <name type="ordered locus">YALI0D00561g</name>
</gene>
<feature type="chain" id="PRO_0000205736" description="Pre-mRNA-splicing factor SYF1">
    <location>
        <begin position="1"/>
        <end position="736"/>
    </location>
</feature>
<feature type="repeat" description="HAT 1">
    <location>
        <begin position="1"/>
        <end position="27"/>
    </location>
</feature>
<feature type="repeat" description="HAT 2">
    <location>
        <begin position="30"/>
        <end position="62"/>
    </location>
</feature>
<feature type="repeat" description="HAT 3">
    <location>
        <begin position="74"/>
        <end position="106"/>
    </location>
</feature>
<feature type="repeat" description="HAT 4">
    <location>
        <begin position="130"/>
        <end position="161"/>
    </location>
</feature>
<feature type="repeat" description="HAT 5">
    <location>
        <begin position="246"/>
        <end position="281"/>
    </location>
</feature>
<feature type="repeat" description="HAT 6">
    <location>
        <begin position="339"/>
        <end position="373"/>
    </location>
</feature>
<feature type="repeat" description="HAT 7">
    <location>
        <begin position="377"/>
        <end position="409"/>
    </location>
</feature>
<feature type="repeat" description="HAT 8">
    <location>
        <begin position="428"/>
        <end position="460"/>
    </location>
</feature>
<feature type="repeat" description="HAT 9">
    <location>
        <begin position="462"/>
        <end position="494"/>
    </location>
</feature>
<feature type="repeat" description="HAT 10">
    <location>
        <begin position="496"/>
        <end position="529"/>
    </location>
</feature>
<feature type="repeat" description="HAT 11">
    <location>
        <begin position="531"/>
        <end position="563"/>
    </location>
</feature>
<feature type="repeat" description="HAT 12">
    <location>
        <begin position="598"/>
        <end position="632"/>
    </location>
</feature>
<feature type="repeat" description="HAT 13">
    <location>
        <begin position="634"/>
        <end position="667"/>
    </location>
</feature>